<dbReference type="EMBL" id="CP000780">
    <property type="protein sequence ID" value="ABS55056.1"/>
    <property type="molecule type" value="Genomic_DNA"/>
</dbReference>
<dbReference type="RefSeq" id="WP_012106077.1">
    <property type="nucleotide sequence ID" value="NC_009712.1"/>
</dbReference>
<dbReference type="SMR" id="A7I5P5"/>
<dbReference type="STRING" id="456442.Mboo_0538"/>
<dbReference type="GeneID" id="5412232"/>
<dbReference type="KEGG" id="mbn:Mboo_0538"/>
<dbReference type="eggNOG" id="arCOG04097">
    <property type="taxonomic scope" value="Archaea"/>
</dbReference>
<dbReference type="HOGENOM" id="CLU_058591_1_1_2"/>
<dbReference type="OrthoDB" id="9126at2157"/>
<dbReference type="Proteomes" id="UP000002408">
    <property type="component" value="Chromosome"/>
</dbReference>
<dbReference type="GO" id="GO:0022627">
    <property type="term" value="C:cytosolic small ribosomal subunit"/>
    <property type="evidence" value="ECO:0007669"/>
    <property type="project" value="TreeGrafter"/>
</dbReference>
<dbReference type="GO" id="GO:0019843">
    <property type="term" value="F:rRNA binding"/>
    <property type="evidence" value="ECO:0007669"/>
    <property type="project" value="UniProtKB-UniRule"/>
</dbReference>
<dbReference type="GO" id="GO:0003735">
    <property type="term" value="F:structural constituent of ribosome"/>
    <property type="evidence" value="ECO:0007669"/>
    <property type="project" value="InterPro"/>
</dbReference>
<dbReference type="GO" id="GO:0006412">
    <property type="term" value="P:translation"/>
    <property type="evidence" value="ECO:0007669"/>
    <property type="project" value="UniProtKB-UniRule"/>
</dbReference>
<dbReference type="CDD" id="cd02411">
    <property type="entry name" value="KH-II_30S_S3_arch"/>
    <property type="match status" value="1"/>
</dbReference>
<dbReference type="FunFam" id="3.30.300.20:FF:000001">
    <property type="entry name" value="30S ribosomal protein S3"/>
    <property type="match status" value="1"/>
</dbReference>
<dbReference type="Gene3D" id="3.30.300.20">
    <property type="match status" value="1"/>
</dbReference>
<dbReference type="Gene3D" id="3.30.1140.32">
    <property type="entry name" value="Ribosomal protein S3, C-terminal domain"/>
    <property type="match status" value="1"/>
</dbReference>
<dbReference type="HAMAP" id="MF_01309_A">
    <property type="entry name" value="Ribosomal_uS3_A"/>
    <property type="match status" value="1"/>
</dbReference>
<dbReference type="InterPro" id="IPR004087">
    <property type="entry name" value="KH_dom"/>
</dbReference>
<dbReference type="InterPro" id="IPR015946">
    <property type="entry name" value="KH_dom-like_a/b"/>
</dbReference>
<dbReference type="InterPro" id="IPR004044">
    <property type="entry name" value="KH_dom_type_2"/>
</dbReference>
<dbReference type="InterPro" id="IPR009019">
    <property type="entry name" value="KH_sf_prok-type"/>
</dbReference>
<dbReference type="InterPro" id="IPR036419">
    <property type="entry name" value="Ribosomal_S3_C_sf"/>
</dbReference>
<dbReference type="InterPro" id="IPR027488">
    <property type="entry name" value="Ribosomal_uS3_arc"/>
</dbReference>
<dbReference type="InterPro" id="IPR001351">
    <property type="entry name" value="Ribosomal_uS3_C"/>
</dbReference>
<dbReference type="InterPro" id="IPR005703">
    <property type="entry name" value="Ribosomal_uS3_euk/arc"/>
</dbReference>
<dbReference type="NCBIfam" id="NF003219">
    <property type="entry name" value="PRK04191.1"/>
    <property type="match status" value="1"/>
</dbReference>
<dbReference type="NCBIfam" id="TIGR01008">
    <property type="entry name" value="uS3_euk_arch"/>
    <property type="match status" value="1"/>
</dbReference>
<dbReference type="PANTHER" id="PTHR11760">
    <property type="entry name" value="30S/40S RIBOSOMAL PROTEIN S3"/>
    <property type="match status" value="1"/>
</dbReference>
<dbReference type="PANTHER" id="PTHR11760:SF32">
    <property type="entry name" value="SMALL RIBOSOMAL SUBUNIT PROTEIN US3"/>
    <property type="match status" value="1"/>
</dbReference>
<dbReference type="Pfam" id="PF07650">
    <property type="entry name" value="KH_2"/>
    <property type="match status" value="1"/>
</dbReference>
<dbReference type="Pfam" id="PF00189">
    <property type="entry name" value="Ribosomal_S3_C"/>
    <property type="match status" value="1"/>
</dbReference>
<dbReference type="SMART" id="SM00322">
    <property type="entry name" value="KH"/>
    <property type="match status" value="1"/>
</dbReference>
<dbReference type="SUPFAM" id="SSF54814">
    <property type="entry name" value="Prokaryotic type KH domain (KH-domain type II)"/>
    <property type="match status" value="1"/>
</dbReference>
<dbReference type="SUPFAM" id="SSF54821">
    <property type="entry name" value="Ribosomal protein S3 C-terminal domain"/>
    <property type="match status" value="1"/>
</dbReference>
<dbReference type="PROSITE" id="PS50823">
    <property type="entry name" value="KH_TYPE_2"/>
    <property type="match status" value="1"/>
</dbReference>
<reference key="1">
    <citation type="journal article" date="2015" name="Microbiology">
        <title>Genome of Methanoregula boonei 6A8 reveals adaptations to oligotrophic peatland environments.</title>
        <authorList>
            <person name="Braeuer S."/>
            <person name="Cadillo-Quiroz H."/>
            <person name="Kyrpides N."/>
            <person name="Woyke T."/>
            <person name="Goodwin L."/>
            <person name="Detter C."/>
            <person name="Podell S."/>
            <person name="Yavitt J.B."/>
            <person name="Zinder S.H."/>
        </authorList>
    </citation>
    <scope>NUCLEOTIDE SEQUENCE [LARGE SCALE GENOMIC DNA]</scope>
    <source>
        <strain>DSM 21154 / JCM 14090 / 6A8</strain>
    </source>
</reference>
<name>RS3_METB6</name>
<proteinExistence type="inferred from homology"/>
<keyword id="KW-1185">Reference proteome</keyword>
<keyword id="KW-0687">Ribonucleoprotein</keyword>
<keyword id="KW-0689">Ribosomal protein</keyword>
<keyword id="KW-0694">RNA-binding</keyword>
<keyword id="KW-0699">rRNA-binding</keyword>
<organism>
    <name type="scientific">Methanoregula boonei (strain DSM 21154 / JCM 14090 / 6A8)</name>
    <dbReference type="NCBI Taxonomy" id="456442"/>
    <lineage>
        <taxon>Archaea</taxon>
        <taxon>Methanobacteriati</taxon>
        <taxon>Methanobacteriota</taxon>
        <taxon>Stenosarchaea group</taxon>
        <taxon>Methanomicrobia</taxon>
        <taxon>Methanomicrobiales</taxon>
        <taxon>Methanoregulaceae</taxon>
        <taxon>Methanoregula</taxon>
    </lineage>
</organism>
<evidence type="ECO:0000255" key="1">
    <source>
        <dbReference type="HAMAP-Rule" id="MF_01309"/>
    </source>
</evidence>
<evidence type="ECO:0000305" key="2"/>
<sequence length="231" mass="25246">MAVERKFIAEGARKARVEKYLTKELKRAGFGGMDIARTPLGTQVTIFAEKPGIVIGKGGKLVHQLTQDLAQNYGVESPQIEVQQVQNPSFNAQIMAERLANALERGWYFRKAGSSIMRRVMDSGALGCEVVIAGKLTGARARTQKFTEGYIKHCGEPSNTIVEKGYAIAIKKLGVIGVQVKIVPADAKMPDHFAIIEQEKKLPAPKTTVTAVIETDNEEPALPDENIDEEV</sequence>
<feature type="chain" id="PRO_0000323316" description="Small ribosomal subunit protein uS3">
    <location>
        <begin position="1"/>
        <end position="231"/>
    </location>
</feature>
<feature type="domain" description="KH type-2" evidence="1">
    <location>
        <begin position="17"/>
        <end position="86"/>
    </location>
</feature>
<gene>
    <name evidence="1" type="primary">rps3</name>
    <name type="ordered locus">Mboo_0538</name>
</gene>
<accession>A7I5P5</accession>
<protein>
    <recommendedName>
        <fullName evidence="1">Small ribosomal subunit protein uS3</fullName>
    </recommendedName>
    <alternativeName>
        <fullName evidence="2">30S ribosomal protein S3</fullName>
    </alternativeName>
</protein>
<comment type="function">
    <text evidence="1">Binds the lower part of the 30S subunit head.</text>
</comment>
<comment type="subunit">
    <text evidence="1">Part of the 30S ribosomal subunit.</text>
</comment>
<comment type="similarity">
    <text evidence="1">Belongs to the universal ribosomal protein uS3 family.</text>
</comment>